<proteinExistence type="inferred from homology"/>
<dbReference type="EC" id="7.1.2.2" evidence="1"/>
<dbReference type="EMBL" id="CP000095">
    <property type="protein sequence ID" value="AAZ58460.1"/>
    <property type="molecule type" value="Genomic_DNA"/>
</dbReference>
<dbReference type="RefSeq" id="WP_011295316.1">
    <property type="nucleotide sequence ID" value="NC_007335.2"/>
</dbReference>
<dbReference type="SMR" id="Q46J68"/>
<dbReference type="STRING" id="59920.PMN2A_0970"/>
<dbReference type="KEGG" id="pmn:PMN2A_0970"/>
<dbReference type="HOGENOM" id="CLU_022398_0_2_3"/>
<dbReference type="OrthoDB" id="9801639at2"/>
<dbReference type="PhylomeDB" id="Q46J68"/>
<dbReference type="Proteomes" id="UP000002535">
    <property type="component" value="Chromosome"/>
</dbReference>
<dbReference type="GO" id="GO:0031676">
    <property type="term" value="C:plasma membrane-derived thylakoid membrane"/>
    <property type="evidence" value="ECO:0007669"/>
    <property type="project" value="UniProtKB-SubCell"/>
</dbReference>
<dbReference type="GO" id="GO:0045259">
    <property type="term" value="C:proton-transporting ATP synthase complex"/>
    <property type="evidence" value="ECO:0007669"/>
    <property type="project" value="UniProtKB-KW"/>
</dbReference>
<dbReference type="GO" id="GO:0005524">
    <property type="term" value="F:ATP binding"/>
    <property type="evidence" value="ECO:0007669"/>
    <property type="project" value="UniProtKB-UniRule"/>
</dbReference>
<dbReference type="GO" id="GO:0016887">
    <property type="term" value="F:ATP hydrolysis activity"/>
    <property type="evidence" value="ECO:0007669"/>
    <property type="project" value="InterPro"/>
</dbReference>
<dbReference type="GO" id="GO:0046933">
    <property type="term" value="F:proton-transporting ATP synthase activity, rotational mechanism"/>
    <property type="evidence" value="ECO:0007669"/>
    <property type="project" value="UniProtKB-UniRule"/>
</dbReference>
<dbReference type="CDD" id="cd18110">
    <property type="entry name" value="ATP-synt_F1_beta_C"/>
    <property type="match status" value="1"/>
</dbReference>
<dbReference type="CDD" id="cd18115">
    <property type="entry name" value="ATP-synt_F1_beta_N"/>
    <property type="match status" value="1"/>
</dbReference>
<dbReference type="CDD" id="cd01133">
    <property type="entry name" value="F1-ATPase_beta_CD"/>
    <property type="match status" value="1"/>
</dbReference>
<dbReference type="FunFam" id="1.10.1140.10:FF:000001">
    <property type="entry name" value="ATP synthase subunit beta"/>
    <property type="match status" value="1"/>
</dbReference>
<dbReference type="FunFam" id="3.40.50.12240:FF:000006">
    <property type="entry name" value="ATP synthase subunit beta"/>
    <property type="match status" value="1"/>
</dbReference>
<dbReference type="FunFam" id="3.40.50.300:FF:000004">
    <property type="entry name" value="ATP synthase subunit beta"/>
    <property type="match status" value="1"/>
</dbReference>
<dbReference type="FunFam" id="2.40.10.170:FF:000002">
    <property type="entry name" value="ATP synthase subunit beta, chloroplastic"/>
    <property type="match status" value="1"/>
</dbReference>
<dbReference type="Gene3D" id="2.40.10.170">
    <property type="match status" value="1"/>
</dbReference>
<dbReference type="Gene3D" id="1.10.1140.10">
    <property type="entry name" value="Bovine Mitochondrial F1-atpase, Atp Synthase Beta Chain, Chain D, domain 3"/>
    <property type="match status" value="1"/>
</dbReference>
<dbReference type="Gene3D" id="3.40.50.300">
    <property type="entry name" value="P-loop containing nucleotide triphosphate hydrolases"/>
    <property type="match status" value="1"/>
</dbReference>
<dbReference type="HAMAP" id="MF_01347">
    <property type="entry name" value="ATP_synth_beta_bact"/>
    <property type="match status" value="1"/>
</dbReference>
<dbReference type="InterPro" id="IPR003593">
    <property type="entry name" value="AAA+_ATPase"/>
</dbReference>
<dbReference type="InterPro" id="IPR055190">
    <property type="entry name" value="ATP-synt_VA_C"/>
</dbReference>
<dbReference type="InterPro" id="IPR005722">
    <property type="entry name" value="ATP_synth_F1_bsu"/>
</dbReference>
<dbReference type="InterPro" id="IPR020003">
    <property type="entry name" value="ATPase_a/bsu_AS"/>
</dbReference>
<dbReference type="InterPro" id="IPR050053">
    <property type="entry name" value="ATPase_alpha/beta_chains"/>
</dbReference>
<dbReference type="InterPro" id="IPR004100">
    <property type="entry name" value="ATPase_F1/V1/A1_a/bsu_N"/>
</dbReference>
<dbReference type="InterPro" id="IPR036121">
    <property type="entry name" value="ATPase_F1/V1/A1_a/bsu_N_sf"/>
</dbReference>
<dbReference type="InterPro" id="IPR000194">
    <property type="entry name" value="ATPase_F1/V1/A1_a/bsu_nucl-bd"/>
</dbReference>
<dbReference type="InterPro" id="IPR024034">
    <property type="entry name" value="ATPase_F1/V1_b/a_C"/>
</dbReference>
<dbReference type="InterPro" id="IPR027417">
    <property type="entry name" value="P-loop_NTPase"/>
</dbReference>
<dbReference type="NCBIfam" id="TIGR01039">
    <property type="entry name" value="atpD"/>
    <property type="match status" value="1"/>
</dbReference>
<dbReference type="PANTHER" id="PTHR15184">
    <property type="entry name" value="ATP SYNTHASE"/>
    <property type="match status" value="1"/>
</dbReference>
<dbReference type="PANTHER" id="PTHR15184:SF71">
    <property type="entry name" value="ATP SYNTHASE SUBUNIT BETA, MITOCHONDRIAL"/>
    <property type="match status" value="1"/>
</dbReference>
<dbReference type="Pfam" id="PF00006">
    <property type="entry name" value="ATP-synt_ab"/>
    <property type="match status" value="1"/>
</dbReference>
<dbReference type="Pfam" id="PF02874">
    <property type="entry name" value="ATP-synt_ab_N"/>
    <property type="match status" value="1"/>
</dbReference>
<dbReference type="Pfam" id="PF22919">
    <property type="entry name" value="ATP-synt_VA_C"/>
    <property type="match status" value="1"/>
</dbReference>
<dbReference type="SMART" id="SM00382">
    <property type="entry name" value="AAA"/>
    <property type="match status" value="1"/>
</dbReference>
<dbReference type="SUPFAM" id="SSF47917">
    <property type="entry name" value="C-terminal domain of alpha and beta subunits of F1 ATP synthase"/>
    <property type="match status" value="1"/>
</dbReference>
<dbReference type="SUPFAM" id="SSF50615">
    <property type="entry name" value="N-terminal domain of alpha and beta subunits of F1 ATP synthase"/>
    <property type="match status" value="1"/>
</dbReference>
<dbReference type="SUPFAM" id="SSF52540">
    <property type="entry name" value="P-loop containing nucleoside triphosphate hydrolases"/>
    <property type="match status" value="1"/>
</dbReference>
<dbReference type="PROSITE" id="PS00152">
    <property type="entry name" value="ATPASE_ALPHA_BETA"/>
    <property type="match status" value="1"/>
</dbReference>
<sequence length="488" mass="52209">MAASATATVGTKGVVRQVIGPVLDVEFPAGKLPSILNALRIEGKNPAGQDVALTAEVQQLLGDHRVRAVAMSGTDGLVRGMEALDTGAPISVPVGEATLGRIFNVLGEPVDEQGDLKNVTTSPIHRSAPSLTDLETKPKVFETGIKVIDLLAPYRQGGKVGLFGGAGVGKTVLIQELINNIAKEHGGVSVFGGVGERTREGNDLYEEFKESGVINSEDLTKSKLALCFGQMNEPPGARMRVGLSALTMAEHFRDVNKQDVLLFIDNIFRFVQAGSEVSALLGRMPSAVGYQPTLGTDVGELQERITSTLEGSITSIQAVYVPADDLTDPAPATTFAHLDATTVLARALAAKGIYPAVDPLDSTSTMLQPSVVGDEHYRTARAVQSTLQRYKELQDIIAILGLDELSEEDRKTVDRARKIEKFLSQPFFVAEIFTGMSGKYVKLEDTIKGFNMILSGELDQLPEQAFYLVGSIDEVKAKAEKIASEAKA</sequence>
<name>ATPB_PROMT</name>
<evidence type="ECO:0000255" key="1">
    <source>
        <dbReference type="HAMAP-Rule" id="MF_01347"/>
    </source>
</evidence>
<reference key="1">
    <citation type="journal article" date="2007" name="PLoS Genet.">
        <title>Patterns and implications of gene gain and loss in the evolution of Prochlorococcus.</title>
        <authorList>
            <person name="Kettler G.C."/>
            <person name="Martiny A.C."/>
            <person name="Huang K."/>
            <person name="Zucker J."/>
            <person name="Coleman M.L."/>
            <person name="Rodrigue S."/>
            <person name="Chen F."/>
            <person name="Lapidus A."/>
            <person name="Ferriera S."/>
            <person name="Johnson J."/>
            <person name="Steglich C."/>
            <person name="Church G.M."/>
            <person name="Richardson P."/>
            <person name="Chisholm S.W."/>
        </authorList>
    </citation>
    <scope>NUCLEOTIDE SEQUENCE [LARGE SCALE GENOMIC DNA]</scope>
    <source>
        <strain>NATL2A</strain>
    </source>
</reference>
<protein>
    <recommendedName>
        <fullName evidence="1">ATP synthase subunit beta</fullName>
        <ecNumber evidence="1">7.1.2.2</ecNumber>
    </recommendedName>
    <alternativeName>
        <fullName evidence="1">ATP synthase F1 sector subunit beta</fullName>
    </alternativeName>
    <alternativeName>
        <fullName evidence="1">F-ATPase subunit beta</fullName>
    </alternativeName>
</protein>
<feature type="chain" id="PRO_0000254334" description="ATP synthase subunit beta">
    <location>
        <begin position="1"/>
        <end position="488"/>
    </location>
</feature>
<feature type="binding site" evidence="1">
    <location>
        <begin position="164"/>
        <end position="171"/>
    </location>
    <ligand>
        <name>ATP</name>
        <dbReference type="ChEBI" id="CHEBI:30616"/>
    </ligand>
</feature>
<gene>
    <name evidence="1" type="primary">atpD</name>
    <name evidence="1" type="synonym">atpB</name>
    <name type="ordered locus">PMN2A_0970</name>
</gene>
<keyword id="KW-0066">ATP synthesis</keyword>
<keyword id="KW-0067">ATP-binding</keyword>
<keyword id="KW-0139">CF(1)</keyword>
<keyword id="KW-0375">Hydrogen ion transport</keyword>
<keyword id="KW-0406">Ion transport</keyword>
<keyword id="KW-0472">Membrane</keyword>
<keyword id="KW-0547">Nucleotide-binding</keyword>
<keyword id="KW-1185">Reference proteome</keyword>
<keyword id="KW-0793">Thylakoid</keyword>
<keyword id="KW-1278">Translocase</keyword>
<keyword id="KW-0813">Transport</keyword>
<comment type="function">
    <text evidence="1">Produces ATP from ADP in the presence of a proton gradient across the membrane. The catalytic sites are hosted primarily by the beta subunits.</text>
</comment>
<comment type="catalytic activity">
    <reaction evidence="1">
        <text>ATP + H2O + 4 H(+)(in) = ADP + phosphate + 5 H(+)(out)</text>
        <dbReference type="Rhea" id="RHEA:57720"/>
        <dbReference type="ChEBI" id="CHEBI:15377"/>
        <dbReference type="ChEBI" id="CHEBI:15378"/>
        <dbReference type="ChEBI" id="CHEBI:30616"/>
        <dbReference type="ChEBI" id="CHEBI:43474"/>
        <dbReference type="ChEBI" id="CHEBI:456216"/>
        <dbReference type="EC" id="7.1.2.2"/>
    </reaction>
</comment>
<comment type="subunit">
    <text evidence="1">F-type ATPases have 2 components, CF(1) - the catalytic core - and CF(0) - the membrane proton channel. CF(1) has five subunits: alpha(3), beta(3), gamma(1), delta(1), epsilon(1). CF(0) has four main subunits: a(1), b(1), b'(1) and c(9-12).</text>
</comment>
<comment type="subcellular location">
    <subcellularLocation>
        <location evidence="1">Cellular thylakoid membrane</location>
        <topology evidence="1">Peripheral membrane protein</topology>
    </subcellularLocation>
</comment>
<comment type="similarity">
    <text evidence="1">Belongs to the ATPase alpha/beta chains family.</text>
</comment>
<organism>
    <name type="scientific">Prochlorococcus marinus (strain NATL2A)</name>
    <dbReference type="NCBI Taxonomy" id="59920"/>
    <lineage>
        <taxon>Bacteria</taxon>
        <taxon>Bacillati</taxon>
        <taxon>Cyanobacteriota</taxon>
        <taxon>Cyanophyceae</taxon>
        <taxon>Synechococcales</taxon>
        <taxon>Prochlorococcaceae</taxon>
        <taxon>Prochlorococcus</taxon>
    </lineage>
</organism>
<accession>Q46J68</accession>